<evidence type="ECO:0000255" key="1">
    <source>
        <dbReference type="PROSITE-ProRule" id="PRU00765"/>
    </source>
</evidence>
<evidence type="ECO:0000256" key="2">
    <source>
        <dbReference type="SAM" id="MobiDB-lite"/>
    </source>
</evidence>
<evidence type="ECO:0000269" key="3">
    <source>
    </source>
</evidence>
<evidence type="ECO:0000269" key="4">
    <source>
    </source>
</evidence>
<evidence type="ECO:0000269" key="5">
    <source>
    </source>
</evidence>
<evidence type="ECO:0000269" key="6">
    <source>
    </source>
</evidence>
<evidence type="ECO:0000269" key="7">
    <source>
    </source>
</evidence>
<evidence type="ECO:0000269" key="8">
    <source>
    </source>
</evidence>
<evidence type="ECO:0000269" key="9">
    <source>
    </source>
</evidence>
<evidence type="ECO:0000269" key="10">
    <source>
    </source>
</evidence>
<evidence type="ECO:0000269" key="11">
    <source>
    </source>
</evidence>
<evidence type="ECO:0000269" key="12">
    <source>
    </source>
</evidence>
<evidence type="ECO:0000269" key="13">
    <source>
    </source>
</evidence>
<evidence type="ECO:0000305" key="14"/>
<evidence type="ECO:0007744" key="15">
    <source>
    </source>
</evidence>
<evidence type="ECO:0007744" key="16">
    <source>
    </source>
</evidence>
<evidence type="ECO:0007744" key="17">
    <source>
    </source>
</evidence>
<sequence length="959" mass="99988">MFGNNRPMFGGSNLSFGSNTSSFGGQQSQQPNSLFGNSNNNNNSTSNNAQSGFGGFTSAAGSNSNSLFGNNNTQNNGAFGQSMGATQNSPFGSLNSSNASNGNTFGGSSSMGSFGGNTNNAFNNNSNSTNSPFGFNKPNTGGTLFGSQNNNSAGTSSLFGGQSTSTTGTFGNTGSSFGTGLNGNGSNIFGAGNNSQSNTTGSLFGNQQSSAFGTNNQQGSLFGQQSQNTNNAFGNQNQLGGSSFGSKPVGSGSLFGQSNNTLGNTTNNRNGLFGQMNSSNQGSSNSGLFGQNSMNSSTQGVFGQNNNQMQINGNNNNSLFGKANTFSNSASGGLFGQNNQQQGSGLFGQNSQTSGSSGLFGQNNQKQPNTFTQSNTGIGLFGQNNNQQQQSTGLFGAKPAGTTGSLFGGNSSTQPNSLFGTTNVPTSNTQSQQGNSLFGATKLTNMPFGGNPTANQSGSGNSLFGTKPASTTGSLFGNNTASTTVPSTNGLFGNNANNSTSTTNTGLFGAKPDSQSKPALGGGLFGNSNSNSSTIGQNKPVFGGTTQNTGLFGATGTNSSAVGSTGKLFGQNNNTLNVGTQNVPPVNNTTQNALLGTTAVPSLQQAPVTNEQLFSKISIPNSITNPVKATTSKVNADMKRNSSLTSAYRLAPKPLFAPSSNGDAKFQKWGKTLERSDRGSSTSNSITDPESSYLNSNDLLFDPDRRYLKHLVIKNNKNLNVINHNDDEASKVKLVTFTTESASKDDQASSSIAASKLTEKAHSPQTDLKDDHDESTPDPQSKSPNGSTSIPMIENEKISSKVPGLLSNDVTFFKNNYYISPSIETLGNKSLIELRKINNLVIGHRNYGKVEFLEPVDLLNTPLDTLCGDLVTFGPKSCSIYENCSIKPEKGEGINVRCRVTLYSCFPIDKETRKPIKNITHPLLKRSIAKLKENPVYKFESYDPVTGTYSYTIDHPVLT</sequence>
<reference key="1">
    <citation type="journal article" date="1992" name="J. Cell Biol.">
        <title>A new family of yeast nuclear pore complex proteins.</title>
        <authorList>
            <person name="Wente S.R."/>
            <person name="Rout M.P."/>
            <person name="Blobel G."/>
        </authorList>
    </citation>
    <scope>NUCLEOTIDE SEQUENCE [GENOMIC DNA]</scope>
</reference>
<reference key="2">
    <citation type="journal article" date="1994" name="Yeast">
        <title>Sequence of a 20.7 kb region of yeast chromosome XI includes the NUP100 gene, an open reading frame (ORF) possibly representing a nucleoside diphosphate kinase gene, tRNAs for His, Val and Trp in addition to seven ORFs with weak or no significant similarity to known proteins.</title>
        <authorList>
            <person name="Rasmussen S.W."/>
        </authorList>
    </citation>
    <scope>NUCLEOTIDE SEQUENCE [GENOMIC DNA]</scope>
    <source>
        <strain>ATCC 204508 / S288c</strain>
    </source>
</reference>
<reference key="3">
    <citation type="journal article" date="1994" name="Nature">
        <title>Complete DNA sequence of yeast chromosome XI.</title>
        <authorList>
            <person name="Dujon B."/>
            <person name="Alexandraki D."/>
            <person name="Andre B."/>
            <person name="Ansorge W."/>
            <person name="Baladron V."/>
            <person name="Ballesta J.P.G."/>
            <person name="Banrevi A."/>
            <person name="Bolle P.-A."/>
            <person name="Bolotin-Fukuhara M."/>
            <person name="Bossier P."/>
            <person name="Bou G."/>
            <person name="Boyer J."/>
            <person name="Buitrago M.J."/>
            <person name="Cheret G."/>
            <person name="Colleaux L."/>
            <person name="Daignan-Fornier B."/>
            <person name="del Rey F."/>
            <person name="Dion C."/>
            <person name="Domdey H."/>
            <person name="Duesterhoeft A."/>
            <person name="Duesterhus S."/>
            <person name="Entian K.-D."/>
            <person name="Erfle H."/>
            <person name="Esteban P.F."/>
            <person name="Feldmann H."/>
            <person name="Fernandes L."/>
            <person name="Fobo G.M."/>
            <person name="Fritz C."/>
            <person name="Fukuhara H."/>
            <person name="Gabel C."/>
            <person name="Gaillon L."/>
            <person name="Garcia-Cantalejo J.M."/>
            <person name="Garcia-Ramirez J.J."/>
            <person name="Gent M.E."/>
            <person name="Ghazvini M."/>
            <person name="Goffeau A."/>
            <person name="Gonzalez A."/>
            <person name="Grothues D."/>
            <person name="Guerreiro P."/>
            <person name="Hegemann J.H."/>
            <person name="Hewitt N."/>
            <person name="Hilger F."/>
            <person name="Hollenberg C.P."/>
            <person name="Horaitis O."/>
            <person name="Indge K.J."/>
            <person name="Jacquier A."/>
            <person name="James C.M."/>
            <person name="Jauniaux J.-C."/>
            <person name="Jimenez A."/>
            <person name="Keuchel H."/>
            <person name="Kirchrath L."/>
            <person name="Kleine K."/>
            <person name="Koetter P."/>
            <person name="Legrain P."/>
            <person name="Liebl S."/>
            <person name="Louis E.J."/>
            <person name="Maia e Silva A."/>
            <person name="Marck C."/>
            <person name="Monnier A.-L."/>
            <person name="Moestl D."/>
            <person name="Mueller S."/>
            <person name="Obermaier B."/>
            <person name="Oliver S.G."/>
            <person name="Pallier C."/>
            <person name="Pascolo S."/>
            <person name="Pfeiffer F."/>
            <person name="Philippsen P."/>
            <person name="Planta R.J."/>
            <person name="Pohl F.M."/>
            <person name="Pohl T.M."/>
            <person name="Poehlmann R."/>
            <person name="Portetelle D."/>
            <person name="Purnelle B."/>
            <person name="Puzos V."/>
            <person name="Ramezani Rad M."/>
            <person name="Rasmussen S.W."/>
            <person name="Remacha M.A."/>
            <person name="Revuelta J.L."/>
            <person name="Richard G.-F."/>
            <person name="Rieger M."/>
            <person name="Rodrigues-Pousada C."/>
            <person name="Rose M."/>
            <person name="Rupp T."/>
            <person name="Santos M.A."/>
            <person name="Schwager C."/>
            <person name="Sensen C."/>
            <person name="Skala J."/>
            <person name="Soares H."/>
            <person name="Sor F."/>
            <person name="Stegemann J."/>
            <person name="Tettelin H."/>
            <person name="Thierry A."/>
            <person name="Tzermia M."/>
            <person name="Urrestarazu L.A."/>
            <person name="van Dyck L."/>
            <person name="van Vliet-Reedijk J.C."/>
            <person name="Valens M."/>
            <person name="Vandenbol M."/>
            <person name="Vilela C."/>
            <person name="Vissers S."/>
            <person name="von Wettstein D."/>
            <person name="Voss H."/>
            <person name="Wiemann S."/>
            <person name="Xu G."/>
            <person name="Zimmermann J."/>
            <person name="Haasemann M."/>
            <person name="Becker I."/>
            <person name="Mewes H.-W."/>
        </authorList>
    </citation>
    <scope>NUCLEOTIDE SEQUENCE [LARGE SCALE GENOMIC DNA]</scope>
    <source>
        <strain>ATCC 204508 / S288c</strain>
    </source>
</reference>
<reference key="4">
    <citation type="journal article" date="2014" name="G3 (Bethesda)">
        <title>The reference genome sequence of Saccharomyces cerevisiae: Then and now.</title>
        <authorList>
            <person name="Engel S.R."/>
            <person name="Dietrich F.S."/>
            <person name="Fisk D.G."/>
            <person name="Binkley G."/>
            <person name="Balakrishnan R."/>
            <person name="Costanzo M.C."/>
            <person name="Dwight S.S."/>
            <person name="Hitz B.C."/>
            <person name="Karra K."/>
            <person name="Nash R.S."/>
            <person name="Weng S."/>
            <person name="Wong E.D."/>
            <person name="Lloyd P."/>
            <person name="Skrzypek M.S."/>
            <person name="Miyasato S.R."/>
            <person name="Simison M."/>
            <person name="Cherry J.M."/>
        </authorList>
    </citation>
    <scope>GENOME REANNOTATION</scope>
    <source>
        <strain>ATCC 204508 / S288c</strain>
    </source>
</reference>
<reference key="5">
    <citation type="journal article" date="1994" name="Cell">
        <title>Nup145p is required for nuclear export of mRNA and binds homopolymeric RNA in vitro via a novel conserved motif.</title>
        <authorList>
            <person name="Fabre E."/>
            <person name="Boelens W.C."/>
            <person name="Wimmer C."/>
            <person name="Mattaj I.W."/>
            <person name="Hurt E.C."/>
        </authorList>
    </citation>
    <scope>FUNCTION</scope>
    <scope>MRNA-BINDING MOTIF</scope>
</reference>
<reference key="6">
    <citation type="journal article" date="1995" name="J. Cell Biol.">
        <title>The GLFG repetitive region of the nucleoporin Nup116p interacts with Kap95p, an essential yeast nuclear import factor.</title>
        <authorList>
            <person name="Iovine M.K."/>
            <person name="Watkins J.L."/>
            <person name="Wente S.R."/>
        </authorList>
    </citation>
    <scope>FUNCTION</scope>
    <scope>INTERACTION WITH KAP95</scope>
</reference>
<reference key="7">
    <citation type="journal article" date="2000" name="J. Cell Biol.">
        <title>The yeast nuclear pore complex: composition, architecture, and transport mechanism.</title>
        <authorList>
            <person name="Rout M.P."/>
            <person name="Aitchison J.D."/>
            <person name="Suprapto A."/>
            <person name="Hjertaas K."/>
            <person name="Zhao Y."/>
            <person name="Chait B.T."/>
        </authorList>
    </citation>
    <scope>FUNCTION</scope>
    <scope>IDENTIFICATION IN THE NUCLEAR PORE COMPLEX</scope>
    <scope>SUBCELLULAR LOCATION</scope>
</reference>
<reference key="8">
    <citation type="journal article" date="2001" name="J. Biol. Chem.">
        <title>The GLFG regions of Nup116p and Nup100p serve as binding sites for both Kap95p and Mex67p at the nuclear pore complex.</title>
        <authorList>
            <person name="Strawn L.A."/>
            <person name="Shen T.X."/>
            <person name="Wente S.R."/>
        </authorList>
    </citation>
    <scope>FUNCTION</scope>
    <scope>INTERACTION WITH MEX67</scope>
</reference>
<reference key="9">
    <citation type="journal article" date="2001" name="J. Biol. Chem.">
        <title>Proteomic analysis of nucleoporin interacting proteins.</title>
        <authorList>
            <person name="Allen N.P."/>
            <person name="Huang L."/>
            <person name="Burlingame A."/>
            <person name="Rexach M."/>
        </authorList>
    </citation>
    <scope>FUNCTION</scope>
    <scope>NUCLEOPORIN INTERACTING PROTEINS</scope>
</reference>
<reference key="10">
    <citation type="journal article" date="2002" name="J. Biol. Chem.">
        <title>GLFG and FxFG nucleoporins bind to overlapping sites on importin-beta.</title>
        <authorList>
            <person name="Bayliss R."/>
            <person name="Littlewood T."/>
            <person name="Strawn L.A."/>
            <person name="Wente S.R."/>
            <person name="Stewart M."/>
        </authorList>
    </citation>
    <scope>FUNCTION</scope>
    <scope>STRUCTURAL BASIS OF FG REPEAT INTERACTION</scope>
    <scope>INTERACTION WITH KAP95</scope>
</reference>
<reference key="11">
    <citation type="journal article" date="2002" name="Mol. Cell. Proteomics">
        <title>Deciphering networks of protein interactions at the nuclear pore complex.</title>
        <authorList>
            <person name="Allen N.P."/>
            <person name="Patel S.S."/>
            <person name="Huang L."/>
            <person name="Chalkley R.J."/>
            <person name="Burlingame A."/>
            <person name="Lutzmann M."/>
            <person name="Hurt E.C."/>
            <person name="Rexach M."/>
        </authorList>
    </citation>
    <scope>FUNCTION</scope>
    <scope>NUCLEOPORIN INTERACTING PROTEINS</scope>
</reference>
<reference key="12">
    <citation type="journal article" date="2003" name="J. Biol. Chem.">
        <title>A gradient of affinity for the karyopherin Kap95p along the yeast nuclear pore complex.</title>
        <authorList>
            <person name="Pyhtila B."/>
            <person name="Rexach M."/>
        </authorList>
    </citation>
    <scope>FUNCTION</scope>
    <scope>AFFINITY GRADIENT FOR KARYOPHERIN KAP95</scope>
</reference>
<reference key="13">
    <citation type="journal article" date="2003" name="Nature">
        <title>Global analysis of protein expression in yeast.</title>
        <authorList>
            <person name="Ghaemmaghami S."/>
            <person name="Huh W.-K."/>
            <person name="Bower K."/>
            <person name="Howson R.W."/>
            <person name="Belle A."/>
            <person name="Dephoure N."/>
            <person name="O'Shea E.K."/>
            <person name="Weissman J.S."/>
        </authorList>
    </citation>
    <scope>LEVEL OF PROTEIN EXPRESSION [LARGE SCALE ANALYSIS]</scope>
</reference>
<reference key="14">
    <citation type="journal article" date="2003" name="Proc. Natl. Acad. Sci. U.S.A.">
        <title>Disorder in the nuclear pore complex: the FG repeat regions of nucleoporins are natively unfolded.</title>
        <authorList>
            <person name="Denning D.P."/>
            <person name="Patel S.S."/>
            <person name="Uversky V."/>
            <person name="Fink A.L."/>
            <person name="Rexach M."/>
        </authorList>
    </citation>
    <scope>FUNCTION</scope>
    <scope>FG REPEAT STRUCTURE</scope>
</reference>
<reference key="15">
    <citation type="journal article" date="2004" name="Nat. Cell Biol.">
        <title>Minimal nuclear pore complexes define FG repeat domains essential for transport.</title>
        <authorList>
            <person name="Strawn L.A."/>
            <person name="Shen T.X."/>
            <person name="Shulga N."/>
            <person name="Goldfarb D.S."/>
            <person name="Wente S.R."/>
        </authorList>
    </citation>
    <scope>FUNCTION</scope>
    <scope>FG REPEATS IN NPC TRANSPORT</scope>
</reference>
<reference key="16">
    <citation type="journal article" date="2003" name="Dev. Cell">
        <title>Peering through the pore: nuclear pore complex structure, assembly, and function.</title>
        <authorList>
            <person name="Suntharalingam M."/>
            <person name="Wente S.R."/>
        </authorList>
    </citation>
    <scope>REVIEW</scope>
</reference>
<reference key="17">
    <citation type="journal article" date="2007" name="J. Proteome Res.">
        <title>Large-scale phosphorylation analysis of alpha-factor-arrested Saccharomyces cerevisiae.</title>
        <authorList>
            <person name="Li X."/>
            <person name="Gerber S.A."/>
            <person name="Rudner A.D."/>
            <person name="Beausoleil S.A."/>
            <person name="Haas W."/>
            <person name="Villen J."/>
            <person name="Elias J.E."/>
            <person name="Gygi S.P."/>
        </authorList>
    </citation>
    <scope>PHOSPHORYLATION [LARGE SCALE ANALYSIS] AT SER-763</scope>
    <scope>IDENTIFICATION BY MASS SPECTROMETRY [LARGE SCALE ANALYSIS]</scope>
    <source>
        <strain>ADR376</strain>
    </source>
</reference>
<reference key="18">
    <citation type="journal article" date="2008" name="Mol. Cell. Proteomics">
        <title>A multidimensional chromatography technology for in-depth phosphoproteome analysis.</title>
        <authorList>
            <person name="Albuquerque C.P."/>
            <person name="Smolka M.B."/>
            <person name="Payne S.H."/>
            <person name="Bafna V."/>
            <person name="Eng J."/>
            <person name="Zhou H."/>
        </authorList>
    </citation>
    <scope>PHOSPHORYLATION [LARGE SCALE ANALYSIS] AT SER-783</scope>
    <scope>IDENTIFICATION BY MASS SPECTROMETRY [LARGE SCALE ANALYSIS]</scope>
</reference>
<reference key="19">
    <citation type="journal article" date="2009" name="Science">
        <title>Global analysis of Cdk1 substrate phosphorylation sites provides insights into evolution.</title>
        <authorList>
            <person name="Holt L.J."/>
            <person name="Tuch B.B."/>
            <person name="Villen J."/>
            <person name="Johnson A.D."/>
            <person name="Gygi S.P."/>
            <person name="Morgan D.O."/>
        </authorList>
    </citation>
    <scope>PHOSPHORYLATION [LARGE SCALE ANALYSIS] AT SER-763 AND SER-783</scope>
    <scope>IDENTIFICATION BY MASS SPECTROMETRY [LARGE SCALE ANALYSIS]</scope>
</reference>
<protein>
    <recommendedName>
        <fullName>Nucleoporin NUP100/NSP100</fullName>
    </recommendedName>
    <alternativeName>
        <fullName>Nuclear pore protein NUP100/NSP100</fullName>
    </alternativeName>
</protein>
<accession>Q02629</accession>
<accession>D6VXL9</accession>
<proteinExistence type="evidence at protein level"/>
<organism>
    <name type="scientific">Saccharomyces cerevisiae (strain ATCC 204508 / S288c)</name>
    <name type="common">Baker's yeast</name>
    <dbReference type="NCBI Taxonomy" id="559292"/>
    <lineage>
        <taxon>Eukaryota</taxon>
        <taxon>Fungi</taxon>
        <taxon>Dikarya</taxon>
        <taxon>Ascomycota</taxon>
        <taxon>Saccharomycotina</taxon>
        <taxon>Saccharomycetes</taxon>
        <taxon>Saccharomycetales</taxon>
        <taxon>Saccharomycetaceae</taxon>
        <taxon>Saccharomyces</taxon>
    </lineage>
</organism>
<name>NU100_YEAST</name>
<comment type="function">
    <text evidence="3 4 5 6 7 8 9 11 12 13">Functions as a component of the nuclear pore complex (NPC). NPC components, collectively referred to as nucleoporins (NUPs), can play the role of both NPC structural components and of docking or interaction partners for transiently associated nuclear transport factors. Active directional transport is assured by both, a Phe-Gly (FG) repeat affinity gradient for these transport factors across the NPC and a transport cofactor concentration gradient across the nuclear envelope (GSP1 and GSP2 GTPases associated predominantly with GTP in the nucleus, with GDP in the cytoplasm). NUP100 plays an important role in several nuclear export and import pathways including poly(A)+ RNA and protein transport.</text>
</comment>
<comment type="subunit">
    <text evidence="3 4 6 13">Component of the nuclear pore complex (NPC). NPC constitutes the exclusive means of nucleocytoplasmic transport. NPCs allow the passive diffusion of ions and small molecules and the active, nuclear transport receptor-mediated bidirectional transport of macromolecules such as proteins, RNAs, ribonucleoparticles (RNPs), and ribosomal subunits across the nuclear envelope. Due to its 8-fold rotational symmetry, all subunits are present with 8 copies or multiples thereof. Through its FG repeats NUP100 interacts with numerous karyopherins including KAP95, and MEX67.</text>
</comment>
<comment type="interaction">
    <interactant intactId="EBI-11698">
        <id>Q02629</id>
    </interactant>
    <interactant intactId="EBI-9145">
        <id>Q06142</id>
        <label>KAP95</label>
    </interactant>
    <organismsDiffer>false</organismsDiffer>
    <experiments>6</experiments>
</comment>
<comment type="interaction">
    <interactant intactId="EBI-11698">
        <id>Q02629</id>
    </interactant>
    <interactant intactId="EBI-11703">
        <id>Q02630</id>
        <label>NUP116</label>
    </interactant>
    <organismsDiffer>false</organismsDiffer>
    <experiments>4</experiments>
</comment>
<comment type="interaction">
    <interactant intactId="EBI-11698">
        <id>Q02629</id>
    </interactant>
    <interactant intactId="EBI-12310">
        <id>P49686</id>
        <label>NUP42</label>
    </interactant>
    <organismsDiffer>false</organismsDiffer>
    <experiments>2</experiments>
</comment>
<comment type="interaction">
    <interactant intactId="EBI-11698">
        <id>Q02629</id>
    </interactant>
    <interactant intactId="EBI-12324">
        <id>P48837</id>
        <label>NUP57</label>
    </interactant>
    <organismsDiffer>false</organismsDiffer>
    <experiments>3</experiments>
</comment>
<comment type="interaction">
    <interactant intactId="EBI-11698">
        <id>Q02629</id>
    </interactant>
    <interactant intactId="EBI-12337">
        <id>P52891</id>
        <label>NUP84</label>
    </interactant>
    <organismsDiffer>false</organismsDiffer>
    <experiments>2</experiments>
</comment>
<comment type="interaction">
    <interactant intactId="EBI-11698">
        <id>Q02629</id>
    </interactant>
    <interactant intactId="EBI-12345">
        <id>P46673</id>
        <label>NUP85</label>
    </interactant>
    <organismsDiffer>false</organismsDiffer>
    <experiments>4</experiments>
</comment>
<comment type="subcellular location">
    <subcellularLocation>
        <location evidence="3">Nucleus</location>
        <location evidence="3">Nuclear pore complex</location>
    </subcellularLocation>
    <subcellularLocation>
        <location>Nucleus membrane</location>
        <topology>Peripheral membrane protein</topology>
        <orientation>Cytoplasmic side</orientation>
    </subcellularLocation>
    <subcellularLocation>
        <location>Nucleus membrane</location>
        <topology>Peripheral membrane protein</topology>
        <orientation>Nucleoplasmic side</orientation>
    </subcellularLocation>
    <text>Biased towards cytoplasmic side.</text>
</comment>
<comment type="domain">
    <text>Contains FG repeats. FG repeats are interaction sites for karyopherins (importins, exportins) and form probably an affinity gradient, guiding the transport proteins unidirectionally with their cargo through the NPC. FG repeat regions are highly flexible and lack ordered secondary structure. The overall conservation of FG repeats regarding exact sequence, spacing, and repeat unit length is limited. FG repeat types and their physico-chemical environment change across the NPC from the nucleoplasmic to the cytoplasmic side: GLFG repeats are especially abundant in NUPs in the central region (lacking a charged environment but are enriched in Ser, Thr, Gln, and Asn).</text>
</comment>
<comment type="miscellaneous">
    <text evidence="10">Present with 358 molecules/cell in log phase SD medium.</text>
</comment>
<comment type="similarity">
    <text evidence="14">Belongs to the nucleoporin GLFG family.</text>
</comment>
<dbReference type="EMBL" id="Z15035">
    <property type="protein sequence ID" value="CAA78753.1"/>
    <property type="molecule type" value="Genomic_DNA"/>
</dbReference>
<dbReference type="EMBL" id="X75780">
    <property type="protein sequence ID" value="CAA53406.1"/>
    <property type="molecule type" value="Genomic_DNA"/>
</dbReference>
<dbReference type="EMBL" id="Z28068">
    <property type="protein sequence ID" value="CAA81905.1"/>
    <property type="molecule type" value="Genomic_DNA"/>
</dbReference>
<dbReference type="EMBL" id="BK006944">
    <property type="protein sequence ID" value="DAA09089.1"/>
    <property type="molecule type" value="Genomic_DNA"/>
</dbReference>
<dbReference type="PIR" id="B44402">
    <property type="entry name" value="B44402"/>
</dbReference>
<dbReference type="RefSeq" id="NP_012855.1">
    <property type="nucleotide sequence ID" value="NM_001179634.1"/>
</dbReference>
<dbReference type="BioGRID" id="34065">
    <property type="interactions" value="152"/>
</dbReference>
<dbReference type="ComplexPortal" id="CPX-824">
    <property type="entry name" value="Nuclear pore complex"/>
</dbReference>
<dbReference type="DIP" id="DIP-2351N"/>
<dbReference type="FunCoup" id="Q02629">
    <property type="interactions" value="196"/>
</dbReference>
<dbReference type="IntAct" id="Q02629">
    <property type="interactions" value="34"/>
</dbReference>
<dbReference type="MINT" id="Q02629"/>
<dbReference type="STRING" id="4932.YKL068W"/>
<dbReference type="MEROPS" id="S59.952"/>
<dbReference type="TCDB" id="1.I.1.1.1">
    <property type="family name" value="the nuclear pore complex (npc) family"/>
</dbReference>
<dbReference type="iPTMnet" id="Q02629"/>
<dbReference type="PaxDb" id="4932-YKL068W"/>
<dbReference type="PeptideAtlas" id="Q02629"/>
<dbReference type="DNASU" id="853796"/>
<dbReference type="EnsemblFungi" id="YKL068W_mRNA">
    <property type="protein sequence ID" value="YKL068W"/>
    <property type="gene ID" value="YKL068W"/>
</dbReference>
<dbReference type="GeneID" id="853796"/>
<dbReference type="KEGG" id="sce:YKL068W"/>
<dbReference type="AGR" id="SGD:S000001551"/>
<dbReference type="SGD" id="S000001551">
    <property type="gene designation" value="NUP100"/>
</dbReference>
<dbReference type="VEuPathDB" id="FungiDB:YKL068W"/>
<dbReference type="eggNOG" id="KOG0845">
    <property type="taxonomic scope" value="Eukaryota"/>
</dbReference>
<dbReference type="GeneTree" id="ENSGT00550000074799"/>
<dbReference type="HOGENOM" id="CLU_011051_0_0_1"/>
<dbReference type="InParanoid" id="Q02629"/>
<dbReference type="OMA" id="PHENGKS"/>
<dbReference type="OrthoDB" id="3797628at2759"/>
<dbReference type="BioCyc" id="YEAST:G3O-31864-MONOMER"/>
<dbReference type="BioGRID-ORCS" id="853796">
    <property type="hits" value="5 hits in 10 CRISPR screens"/>
</dbReference>
<dbReference type="CD-CODE" id="691A1FB1">
    <property type="entry name" value="Nuclear pore complex"/>
</dbReference>
<dbReference type="PRO" id="PR:Q02629"/>
<dbReference type="Proteomes" id="UP000002311">
    <property type="component" value="Chromosome XI"/>
</dbReference>
<dbReference type="RNAct" id="Q02629">
    <property type="molecule type" value="protein"/>
</dbReference>
<dbReference type="GO" id="GO:0005635">
    <property type="term" value="C:nuclear envelope"/>
    <property type="evidence" value="ECO:0000303"/>
    <property type="project" value="ComplexPortal"/>
</dbReference>
<dbReference type="GO" id="GO:0031965">
    <property type="term" value="C:nuclear membrane"/>
    <property type="evidence" value="ECO:0007669"/>
    <property type="project" value="UniProtKB-SubCell"/>
</dbReference>
<dbReference type="GO" id="GO:0005643">
    <property type="term" value="C:nuclear pore"/>
    <property type="evidence" value="ECO:0000314"/>
    <property type="project" value="SGD"/>
</dbReference>
<dbReference type="GO" id="GO:0044613">
    <property type="term" value="C:nuclear pore central transport channel"/>
    <property type="evidence" value="ECO:0000314"/>
    <property type="project" value="SGD"/>
</dbReference>
<dbReference type="GO" id="GO:0044614">
    <property type="term" value="C:nuclear pore cytoplasmic filaments"/>
    <property type="evidence" value="ECO:0000318"/>
    <property type="project" value="GO_Central"/>
</dbReference>
<dbReference type="GO" id="GO:0140693">
    <property type="term" value="F:molecular condensate scaffold activity"/>
    <property type="evidence" value="ECO:0000314"/>
    <property type="project" value="DisProt"/>
</dbReference>
<dbReference type="GO" id="GO:0008139">
    <property type="term" value="F:nuclear localization sequence binding"/>
    <property type="evidence" value="ECO:0000318"/>
    <property type="project" value="GO_Central"/>
</dbReference>
<dbReference type="GO" id="GO:0003723">
    <property type="term" value="F:RNA binding"/>
    <property type="evidence" value="ECO:0000318"/>
    <property type="project" value="GO_Central"/>
</dbReference>
<dbReference type="GO" id="GO:0017056">
    <property type="term" value="F:structural constituent of nuclear pore"/>
    <property type="evidence" value="ECO:0000314"/>
    <property type="project" value="SGD"/>
</dbReference>
<dbReference type="GO" id="GO:0140694">
    <property type="term" value="P:membraneless organelle assembly"/>
    <property type="evidence" value="ECO:0000314"/>
    <property type="project" value="DisProt"/>
</dbReference>
<dbReference type="GO" id="GO:0006406">
    <property type="term" value="P:mRNA export from nucleus"/>
    <property type="evidence" value="ECO:0000353"/>
    <property type="project" value="SGD"/>
</dbReference>
<dbReference type="GO" id="GO:0031990">
    <property type="term" value="P:mRNA export from nucleus in response to heat stress"/>
    <property type="evidence" value="ECO:0000315"/>
    <property type="project" value="SGD"/>
</dbReference>
<dbReference type="GO" id="GO:0006607">
    <property type="term" value="P:NLS-bearing protein import into nucleus"/>
    <property type="evidence" value="ECO:0000316"/>
    <property type="project" value="SGD"/>
</dbReference>
<dbReference type="GO" id="GO:0006913">
    <property type="term" value="P:nucleocytoplasmic transport"/>
    <property type="evidence" value="ECO:0000303"/>
    <property type="project" value="ComplexPortal"/>
</dbReference>
<dbReference type="GO" id="GO:0045893">
    <property type="term" value="P:positive regulation of DNA-templated transcription"/>
    <property type="evidence" value="ECO:0000316"/>
    <property type="project" value="SGD"/>
</dbReference>
<dbReference type="GO" id="GO:0000973">
    <property type="term" value="P:post-transcriptional tethering of RNA polymerase II gene DNA at nuclear periphery"/>
    <property type="evidence" value="ECO:0000315"/>
    <property type="project" value="SGD"/>
</dbReference>
<dbReference type="GO" id="GO:0006606">
    <property type="term" value="P:protein import into nucleus"/>
    <property type="evidence" value="ECO:0000316"/>
    <property type="project" value="SGD"/>
</dbReference>
<dbReference type="GO" id="GO:0036228">
    <property type="term" value="P:protein localization to nuclear inner membrane"/>
    <property type="evidence" value="ECO:0000316"/>
    <property type="project" value="SGD"/>
</dbReference>
<dbReference type="GO" id="GO:2000238">
    <property type="term" value="P:regulation of tRNA export from nucleus"/>
    <property type="evidence" value="ECO:0000315"/>
    <property type="project" value="SGD"/>
</dbReference>
<dbReference type="GO" id="GO:0006405">
    <property type="term" value="P:RNA export from nucleus"/>
    <property type="evidence" value="ECO:0000318"/>
    <property type="project" value="GO_Central"/>
</dbReference>
<dbReference type="GO" id="GO:0034398">
    <property type="term" value="P:telomere tethering at nuclear periphery"/>
    <property type="evidence" value="ECO:0000318"/>
    <property type="project" value="GO_Central"/>
</dbReference>
<dbReference type="DisProt" id="DP01076"/>
<dbReference type="FunFam" id="3.30.1610.10:FF:000003">
    <property type="entry name" value="Nucleoporin SONB, putative"/>
    <property type="match status" value="1"/>
</dbReference>
<dbReference type="Gene3D" id="3.30.1610.10">
    <property type="entry name" value="Peptidase S59, nucleoporin"/>
    <property type="match status" value="1"/>
</dbReference>
<dbReference type="InterPro" id="IPR025574">
    <property type="entry name" value="Nucleoporin_FG_rpt"/>
</dbReference>
<dbReference type="InterPro" id="IPR037665">
    <property type="entry name" value="Nucleoporin_S59-like"/>
</dbReference>
<dbReference type="InterPro" id="IPR007230">
    <property type="entry name" value="Nup98_auto-Pept-S59_dom"/>
</dbReference>
<dbReference type="InterPro" id="IPR036903">
    <property type="entry name" value="Nup98_auto-Pept-S59_dom_sf"/>
</dbReference>
<dbReference type="PANTHER" id="PTHR23198">
    <property type="entry name" value="NUCLEOPORIN"/>
    <property type="match status" value="1"/>
</dbReference>
<dbReference type="PANTHER" id="PTHR23198:SF30">
    <property type="entry name" value="NUCLEOPORIN NUP100_NSP100-RELATED"/>
    <property type="match status" value="1"/>
</dbReference>
<dbReference type="Pfam" id="PF04096">
    <property type="entry name" value="Nucleoporin2"/>
    <property type="match status" value="1"/>
</dbReference>
<dbReference type="Pfam" id="PF13634">
    <property type="entry name" value="Nucleoporin_FG"/>
    <property type="match status" value="3"/>
</dbReference>
<dbReference type="SUPFAM" id="SSF82215">
    <property type="entry name" value="C-terminal autoproteolytic domain of nucleoporin nup98"/>
    <property type="match status" value="1"/>
</dbReference>
<dbReference type="PROSITE" id="PS51434">
    <property type="entry name" value="NUP_C"/>
    <property type="match status" value="1"/>
</dbReference>
<keyword id="KW-0472">Membrane</keyword>
<keyword id="KW-0509">mRNA transport</keyword>
<keyword id="KW-0906">Nuclear pore complex</keyword>
<keyword id="KW-0539">Nucleus</keyword>
<keyword id="KW-0597">Phosphoprotein</keyword>
<keyword id="KW-0653">Protein transport</keyword>
<keyword id="KW-1185">Reference proteome</keyword>
<keyword id="KW-0677">Repeat</keyword>
<keyword id="KW-0811">Translocation</keyword>
<keyword id="KW-0813">Transport</keyword>
<feature type="chain" id="PRO_0000204830" description="Nucleoporin NUP100/NSP100">
    <location>
        <begin position="1"/>
        <end position="959"/>
    </location>
</feature>
<feature type="repeat" description="FG 1">
    <location>
        <begin position="2"/>
        <end position="3"/>
    </location>
</feature>
<feature type="repeat" description="FG 2">
    <location>
        <begin position="9"/>
        <end position="10"/>
    </location>
</feature>
<feature type="repeat" description="FG 3">
    <location>
        <position position="17"/>
    </location>
</feature>
<feature type="repeat" description="SLFG 1; approximate">
    <location>
        <begin position="21"/>
        <end position="24"/>
    </location>
</feature>
<feature type="repeat" description="SLFG 2">
    <location>
        <begin position="33"/>
        <end position="36"/>
    </location>
</feature>
<feature type="repeat" description="SLFG 3; approximate">
    <location>
        <begin position="51"/>
        <end position="54"/>
    </location>
</feature>
<feature type="repeat" description="SLFG 4">
    <location>
        <begin position="66"/>
        <end position="69"/>
    </location>
</feature>
<feature type="repeat" description="GLFG 1; approximate">
    <location>
        <begin position="77"/>
        <end position="80"/>
    </location>
</feature>
<feature type="repeat" description="SLFG 5; approximate">
    <location>
        <begin position="89"/>
        <end position="92"/>
    </location>
</feature>
<feature type="repeat" description="FG 4">
    <location>
        <begin position="105"/>
        <end position="106"/>
    </location>
</feature>
<feature type="repeat" description="GLFG 2; approximate">
    <location>
        <begin position="112"/>
        <end position="115"/>
    </location>
</feature>
<feature type="repeat" description="SLFG 6; approximate">
    <location>
        <begin position="131"/>
        <end position="134"/>
    </location>
</feature>
<feature type="repeat" description="FG 5">
    <location>
        <begin position="145"/>
        <end position="146"/>
    </location>
</feature>
<feature type="repeat" description="SLFG 7">
    <location>
        <begin position="157"/>
        <end position="160"/>
    </location>
</feature>
<feature type="repeat" description="GLFG 3; approximate">
    <location>
        <begin position="168"/>
        <end position="171"/>
    </location>
</feature>
<feature type="repeat" description="SLFG 8; approximate">
    <location>
        <begin position="175"/>
        <end position="178"/>
    </location>
</feature>
<feature type="repeat" description="FG 6">
    <location>
        <begin position="189"/>
        <end position="190"/>
    </location>
</feature>
<feature type="repeat" description="SLFG 9">
    <location>
        <begin position="202"/>
        <end position="205"/>
    </location>
</feature>
<feature type="repeat" description="SLFG 10; approximate">
    <location>
        <begin position="210"/>
        <end position="213"/>
    </location>
</feature>
<feature type="repeat" description="SLFG 11">
    <location>
        <begin position="220"/>
        <end position="223"/>
    </location>
</feature>
<feature type="repeat" description="FG 7">
    <location>
        <begin position="233"/>
        <end position="234"/>
    </location>
</feature>
<feature type="repeat" description="SLFG 12; approximate">
    <location>
        <begin position="242"/>
        <end position="245"/>
    </location>
</feature>
<feature type="repeat" description="SLFG 13">
    <location>
        <begin position="253"/>
        <end position="256"/>
    </location>
</feature>
<feature type="repeat" description="GLFG 4">
    <location>
        <begin position="271"/>
        <end position="274"/>
    </location>
</feature>
<feature type="repeat" description="GLFG 5">
    <location>
        <begin position="287"/>
        <end position="290"/>
    </location>
</feature>
<feature type="repeat" description="GLFG 6; approximate">
    <location>
        <begin position="300"/>
        <end position="303"/>
    </location>
</feature>
<feature type="repeat" description="SLFG 14">
    <location>
        <begin position="318"/>
        <end position="321"/>
    </location>
</feature>
<feature type="repeat" description="GLFG 7">
    <location>
        <begin position="333"/>
        <end position="336"/>
    </location>
</feature>
<feature type="repeat" description="GLFG 8">
    <location>
        <begin position="345"/>
        <end position="348"/>
    </location>
</feature>
<feature type="repeat" description="GLFG 9">
    <location>
        <begin position="358"/>
        <end position="361"/>
    </location>
</feature>
<feature type="repeat" description="GLFG 10">
    <location>
        <begin position="379"/>
        <end position="382"/>
    </location>
</feature>
<feature type="repeat" description="GLFG 11">
    <location>
        <begin position="393"/>
        <end position="396"/>
    </location>
</feature>
<feature type="repeat" description="SLFG 15">
    <location>
        <begin position="405"/>
        <end position="408"/>
    </location>
</feature>
<feature type="repeat" description="SLFG 16">
    <location>
        <begin position="417"/>
        <end position="420"/>
    </location>
</feature>
<feature type="repeat" description="SLFG 17">
    <location>
        <begin position="436"/>
        <end position="439"/>
    </location>
</feature>
<feature type="repeat" description="FG 8">
    <location>
        <begin position="448"/>
        <end position="449"/>
    </location>
</feature>
<feature type="repeat" description="SLFG 18">
    <location>
        <begin position="462"/>
        <end position="465"/>
    </location>
</feature>
<feature type="repeat" description="SLFG 19; approximate">
    <location>
        <begin position="474"/>
        <end position="477"/>
    </location>
</feature>
<feature type="repeat" description="GLFG 12">
    <location>
        <begin position="490"/>
        <end position="493"/>
    </location>
</feature>
<feature type="repeat" description="GLFG 13">
    <location>
        <begin position="506"/>
        <end position="509"/>
    </location>
</feature>
<feature type="repeat" description="GLFG 14">
    <location>
        <begin position="523"/>
        <end position="526"/>
    </location>
</feature>
<feature type="repeat" description="FG 9">
    <location>
        <begin position="542"/>
        <end position="543"/>
    </location>
</feature>
<feature type="repeat" description="GLFG 15">
    <location>
        <begin position="550"/>
        <end position="553"/>
    </location>
</feature>
<feature type="repeat" description="FG 10">
    <location>
        <begin position="569"/>
        <end position="570"/>
    </location>
</feature>
<feature type="domain" description="Peptidase S59" evidence="1">
    <location>
        <begin position="814"/>
        <end position="956"/>
    </location>
</feature>
<feature type="region of interest" description="Disordered" evidence="2">
    <location>
        <begin position="1"/>
        <end position="104"/>
    </location>
</feature>
<feature type="region of interest" description="Disordered" evidence="2">
    <location>
        <begin position="121"/>
        <end position="172"/>
    </location>
</feature>
<feature type="region of interest" description="Disordered" evidence="2">
    <location>
        <begin position="190"/>
        <end position="394"/>
    </location>
</feature>
<feature type="region of interest" description="Disordered" evidence="2">
    <location>
        <begin position="672"/>
        <end position="697"/>
    </location>
</feature>
<feature type="region of interest" description="Disordered" evidence="2">
    <location>
        <begin position="745"/>
        <end position="794"/>
    </location>
</feature>
<feature type="region of interest" description="Nucleoporin RNA-binding motif (NRM)">
    <location>
        <begin position="816"/>
        <end position="955"/>
    </location>
</feature>
<feature type="compositionally biased region" description="Polar residues" evidence="2">
    <location>
        <begin position="12"/>
        <end position="36"/>
    </location>
</feature>
<feature type="compositionally biased region" description="Low complexity" evidence="2">
    <location>
        <begin position="37"/>
        <end position="48"/>
    </location>
</feature>
<feature type="compositionally biased region" description="Low complexity" evidence="2">
    <location>
        <begin position="56"/>
        <end position="81"/>
    </location>
</feature>
<feature type="compositionally biased region" description="Low complexity" evidence="2">
    <location>
        <begin position="92"/>
        <end position="104"/>
    </location>
</feature>
<feature type="compositionally biased region" description="Low complexity" evidence="2">
    <location>
        <begin position="121"/>
        <end position="136"/>
    </location>
</feature>
<feature type="compositionally biased region" description="Polar residues" evidence="2">
    <location>
        <begin position="137"/>
        <end position="153"/>
    </location>
</feature>
<feature type="compositionally biased region" description="Low complexity" evidence="2">
    <location>
        <begin position="154"/>
        <end position="172"/>
    </location>
</feature>
<feature type="compositionally biased region" description="Polar residues" evidence="2">
    <location>
        <begin position="192"/>
        <end position="245"/>
    </location>
</feature>
<feature type="compositionally biased region" description="Low complexity" evidence="2">
    <location>
        <begin position="259"/>
        <end position="293"/>
    </location>
</feature>
<feature type="compositionally biased region" description="Polar residues" evidence="2">
    <location>
        <begin position="294"/>
        <end position="303"/>
    </location>
</feature>
<feature type="compositionally biased region" description="Low complexity" evidence="2">
    <location>
        <begin position="304"/>
        <end position="317"/>
    </location>
</feature>
<feature type="compositionally biased region" description="Low complexity" evidence="2">
    <location>
        <begin position="336"/>
        <end position="352"/>
    </location>
</feature>
<feature type="compositionally biased region" description="Polar residues" evidence="2">
    <location>
        <begin position="353"/>
        <end position="377"/>
    </location>
</feature>
<feature type="compositionally biased region" description="Polar residues" evidence="2">
    <location>
        <begin position="679"/>
        <end position="697"/>
    </location>
</feature>
<feature type="compositionally biased region" description="Basic and acidic residues" evidence="2">
    <location>
        <begin position="757"/>
        <end position="775"/>
    </location>
</feature>
<feature type="compositionally biased region" description="Polar residues" evidence="2">
    <location>
        <begin position="777"/>
        <end position="790"/>
    </location>
</feature>
<feature type="modified residue" description="Phosphoserine" evidence="15 17">
    <location>
        <position position="763"/>
    </location>
</feature>
<feature type="modified residue" description="Phosphoserine" evidence="16 17">
    <location>
        <position position="783"/>
    </location>
</feature>
<gene>
    <name type="primary">NUP100</name>
    <name type="synonym">NSP100</name>
    <name type="ordered locus">YKL068W</name>
    <name type="ORF">YKL336</name>
</gene>